<dbReference type="PIR" id="A02549">
    <property type="entry name" value="GGICEH"/>
</dbReference>
<dbReference type="SMR" id="P02227"/>
<dbReference type="Allergome" id="207">
    <property type="allergen name" value="Chi t 3"/>
</dbReference>
<dbReference type="Allergome" id="3196">
    <property type="allergen name" value="Chi t 3.0901"/>
</dbReference>
<dbReference type="GO" id="GO:0005576">
    <property type="term" value="C:extracellular region"/>
    <property type="evidence" value="ECO:0007669"/>
    <property type="project" value="InterPro"/>
</dbReference>
<dbReference type="GO" id="GO:0005833">
    <property type="term" value="C:hemoglobin complex"/>
    <property type="evidence" value="ECO:0007669"/>
    <property type="project" value="InterPro"/>
</dbReference>
<dbReference type="GO" id="GO:0020037">
    <property type="term" value="F:heme binding"/>
    <property type="evidence" value="ECO:0007669"/>
    <property type="project" value="InterPro"/>
</dbReference>
<dbReference type="GO" id="GO:0046872">
    <property type="term" value="F:metal ion binding"/>
    <property type="evidence" value="ECO:0007669"/>
    <property type="project" value="UniProtKB-KW"/>
</dbReference>
<dbReference type="GO" id="GO:0019825">
    <property type="term" value="F:oxygen binding"/>
    <property type="evidence" value="ECO:0007669"/>
    <property type="project" value="InterPro"/>
</dbReference>
<dbReference type="GO" id="GO:0005344">
    <property type="term" value="F:oxygen carrier activity"/>
    <property type="evidence" value="ECO:0007669"/>
    <property type="project" value="UniProtKB-KW"/>
</dbReference>
<dbReference type="CDD" id="cd01040">
    <property type="entry name" value="Mb-like"/>
    <property type="match status" value="1"/>
</dbReference>
<dbReference type="Gene3D" id="1.10.490.10">
    <property type="entry name" value="Globins"/>
    <property type="match status" value="1"/>
</dbReference>
<dbReference type="InterPro" id="IPR002336">
    <property type="entry name" value="Erythrocruorin"/>
</dbReference>
<dbReference type="InterPro" id="IPR000971">
    <property type="entry name" value="Globin"/>
</dbReference>
<dbReference type="InterPro" id="IPR009050">
    <property type="entry name" value="Globin-like_sf"/>
</dbReference>
<dbReference type="InterPro" id="IPR012292">
    <property type="entry name" value="Globin/Proto"/>
</dbReference>
<dbReference type="InterPro" id="IPR044399">
    <property type="entry name" value="Mb-like_M"/>
</dbReference>
<dbReference type="PANTHER" id="PTHR47217">
    <property type="entry name" value="GLOBIN-LIKE PROTEIN"/>
    <property type="match status" value="1"/>
</dbReference>
<dbReference type="PANTHER" id="PTHR47217:SF1">
    <property type="entry name" value="GLOBIN-LIKE PROTEIN"/>
    <property type="match status" value="1"/>
</dbReference>
<dbReference type="Pfam" id="PF00042">
    <property type="entry name" value="Globin"/>
    <property type="match status" value="1"/>
</dbReference>
<dbReference type="PRINTS" id="PR00611">
    <property type="entry name" value="ERYTHCRUORIN"/>
</dbReference>
<dbReference type="SUPFAM" id="SSF46458">
    <property type="entry name" value="Globin-like"/>
    <property type="match status" value="1"/>
</dbReference>
<dbReference type="PROSITE" id="PS01033">
    <property type="entry name" value="GLOBIN"/>
    <property type="match status" value="1"/>
</dbReference>
<feature type="chain" id="PRO_0000052469" description="Globin CTT-VIII">
    <location>
        <begin position="1"/>
        <end position="151"/>
    </location>
</feature>
<feature type="domain" description="Globin" evidence="1">
    <location>
        <begin position="4"/>
        <end position="148"/>
    </location>
</feature>
<feature type="binding site" description="distal binding residue" evidence="1">
    <location>
        <position position="62"/>
    </location>
    <ligand>
        <name>heme b</name>
        <dbReference type="ChEBI" id="CHEBI:60344"/>
    </ligand>
    <ligandPart>
        <name>Fe</name>
        <dbReference type="ChEBI" id="CHEBI:18248"/>
    </ligandPart>
</feature>
<feature type="binding site" description="proximal binding residue" evidence="1">
    <location>
        <position position="97"/>
    </location>
    <ligand>
        <name>heme b</name>
        <dbReference type="ChEBI" id="CHEBI:60344"/>
    </ligand>
    <ligandPart>
        <name>Fe</name>
        <dbReference type="ChEBI" id="CHEBI:18248"/>
    </ligandPart>
</feature>
<accession>P02227</accession>
<reference key="1">
    <citation type="journal article" date="1981" name="Hoppe-Seyler's Z. Physiol. Chem.">
        <title>Hemoglobins, XXXIX. Amino acid sequence of a dimeric hemoglobin (erythrocruorin) from Chironomus thummi thummi: component CTT VIII.</title>
        <authorList>
            <person name="Aschauer H."/>
            <person name="Braunitzer G."/>
        </authorList>
    </citation>
    <scope>PROTEIN SEQUENCE</scope>
</reference>
<sequence length="151" mass="16898">AVTPMSADQLALFKSSWNTVKHNEVDILYAVFKANPDIQAKFPQFAGKDLDSIKDSADFAVHSGRIVGFFSEVIGLIGNPENRPALKTLIDGLASSHKARGIEKAQFEEFRASLVDYLSHHLDWNDTMKSTWDLALNNMFFYILHALEVAQ</sequence>
<protein>
    <recommendedName>
        <fullName>Globin CTT-VIII</fullName>
    </recommendedName>
</protein>
<evidence type="ECO:0000255" key="1">
    <source>
        <dbReference type="PROSITE-ProRule" id="PRU00238"/>
    </source>
</evidence>
<proteinExistence type="evidence at protein level"/>
<organism>
    <name type="scientific">Chironomus thummi thummi</name>
    <name type="common">Midge</name>
    <dbReference type="NCBI Taxonomy" id="7155"/>
    <lineage>
        <taxon>Eukaryota</taxon>
        <taxon>Metazoa</taxon>
        <taxon>Ecdysozoa</taxon>
        <taxon>Arthropoda</taxon>
        <taxon>Hexapoda</taxon>
        <taxon>Insecta</taxon>
        <taxon>Pterygota</taxon>
        <taxon>Neoptera</taxon>
        <taxon>Endopterygota</taxon>
        <taxon>Diptera</taxon>
        <taxon>Nematocera</taxon>
        <taxon>Chironomoidea</taxon>
        <taxon>Chironomidae</taxon>
        <taxon>Chironominae</taxon>
        <taxon>Chironomus</taxon>
    </lineage>
</organism>
<comment type="subunit">
    <text>Homodimer.</text>
</comment>
<comment type="miscellaneous">
    <text>There are at least 12 different components in Midge globin.</text>
</comment>
<comment type="similarity">
    <text evidence="1">Belongs to the globin family.</text>
</comment>
<name>GLB8_CHITH</name>
<keyword id="KW-0903">Direct protein sequencing</keyword>
<keyword id="KW-0349">Heme</keyword>
<keyword id="KW-0408">Iron</keyword>
<keyword id="KW-0479">Metal-binding</keyword>
<keyword id="KW-0561">Oxygen transport</keyword>
<keyword id="KW-0813">Transport</keyword>
<gene>
    <name type="primary">CTT-8</name>
</gene>